<evidence type="ECO:0000250" key="1">
    <source>
        <dbReference type="UniProtKB" id="Q8TD16"/>
    </source>
</evidence>
<evidence type="ECO:0000255" key="2"/>
<evidence type="ECO:0000256" key="3">
    <source>
        <dbReference type="SAM" id="MobiDB-lite"/>
    </source>
</evidence>
<evidence type="ECO:0000269" key="4">
    <source>
    </source>
</evidence>
<evidence type="ECO:0000269" key="5">
    <source>
    </source>
</evidence>
<evidence type="ECO:0000269" key="6">
    <source>
    </source>
</evidence>
<evidence type="ECO:0000269" key="7">
    <source>
    </source>
</evidence>
<evidence type="ECO:0000269" key="8">
    <source>
    </source>
</evidence>
<evidence type="ECO:0000269" key="9">
    <source>
    </source>
</evidence>
<evidence type="ECO:0000269" key="10">
    <source>
    </source>
</evidence>
<evidence type="ECO:0000269" key="11">
    <source>
    </source>
</evidence>
<evidence type="ECO:0000269" key="12">
    <source>
    </source>
</evidence>
<evidence type="ECO:0000269" key="13">
    <source>
    </source>
</evidence>
<evidence type="ECO:0000303" key="14">
    <source>
    </source>
</evidence>
<evidence type="ECO:0000305" key="15"/>
<evidence type="ECO:0007744" key="16">
    <source>
    </source>
</evidence>
<accession>Q921C5</accession>
<accession>Q80TU1</accession>
<accession>Q8BTE3</accession>
<accession>Q9DCL3</accession>
<organism>
    <name type="scientific">Mus musculus</name>
    <name type="common">Mouse</name>
    <dbReference type="NCBI Taxonomy" id="10090"/>
    <lineage>
        <taxon>Eukaryota</taxon>
        <taxon>Metazoa</taxon>
        <taxon>Chordata</taxon>
        <taxon>Craniata</taxon>
        <taxon>Vertebrata</taxon>
        <taxon>Euteleostomi</taxon>
        <taxon>Mammalia</taxon>
        <taxon>Eutheria</taxon>
        <taxon>Euarchontoglires</taxon>
        <taxon>Glires</taxon>
        <taxon>Rodentia</taxon>
        <taxon>Myomorpha</taxon>
        <taxon>Muroidea</taxon>
        <taxon>Muridae</taxon>
        <taxon>Murinae</taxon>
        <taxon>Mus</taxon>
        <taxon>Mus</taxon>
    </lineage>
</organism>
<comment type="function">
    <text evidence="4 5 7 8 10 11 12">Acts as an adapter protein linking the dynein motor complex to various cargos and converts dynein from a non-processive to a highly processive motor in the presence of dynactin. Facilitates and stabilizes the interaction between dynein and dynactin and activates dynein processivity (the ability to move along a microtubule for a long distance without falling off the track) (PubMed:11483508, PubMed:22956769, PubMed:24986880, PubMed:25035494). Facilitates the binding of RAB6A to the Golgi by stabilizing its GTP-bound form (PubMed:25962623). Regulates coat complex coatomer protein I (COPI)-independent Golgi-endoplasmic reticulum transport via its interaction with RAB6A and recruitment of the dynein-dynactin motor complex (PubMed:12447383, PubMed:25962623). Contributes to nuclear and centrosomal positioning prior to mitotic entry through regulation of both dynein and kinesin-1. During G2 phase of the cell cycle, associates with RANBP2 at the nuclear pores and recruits dynein and dynactin to the nuclear envelope to ensure proper positioning of the nucleus relative to centrosomes prior to the onset of mitosis (PubMed:20386726).</text>
</comment>
<comment type="subunit">
    <text evidence="1 4 5 6 7 8 10 11 12 13">Part of a tripartite complex with dynein and dynactin, acts an adapter linking the dynein motor complex and dynactin (By similarity). Interacts with CPNE4 (via VWFA domain) (PubMed:12522145). Interacts with NEK9 (By similarity). Interacts with DCTN2 (PubMed:11483508, PubMed:22956769). Interacts with RAB6A (PubMed:12447383, PubMed:25962623). Interacts with DNAI1 (By similarity). Interacts with DYNLL1, DYNC1H1, DYNC1I2 and DCTN1 (PubMed:22956769). Forms a complex with dynein and dynactin (PubMed:24986880). The dynein-dynactin-BICD2 ternary complex (DDB) binds preferentially to tyrosinated microtubules than to detyrosinated microtubules (PubMed:26968983). Interacts with RANBP2, RAB6A and KIF5A (PubMed:20386726). Interacts with KIF1C (By similarity).</text>
</comment>
<comment type="interaction">
    <interactant intactId="EBI-642984">
        <id>Q921C5</id>
    </interactant>
    <interactant intactId="EBI-444674">
        <id>P35279</id>
        <label>Rab6a</label>
    </interactant>
    <organismsDiffer>false</organismsDiffer>
    <experiments>3</experiments>
</comment>
<comment type="interaction">
    <interactant intactId="EBI-642995">
        <id>Q921C5-1</id>
    </interactant>
    <interactant intactId="EBI-973138">
        <id>P49792</id>
        <label>RANBP2</label>
    </interactant>
    <organismsDiffer>true</organismsDiffer>
    <experiments>4</experiments>
</comment>
<comment type="subcellular location">
    <subcellularLocation>
        <location evidence="4 5 12">Golgi apparatus</location>
    </subcellularLocation>
    <subcellularLocation>
        <location evidence="4">Cytoplasm</location>
        <location evidence="4">Cytoskeleton</location>
    </subcellularLocation>
    <subcellularLocation>
        <location evidence="1">Cytoplasm</location>
    </subcellularLocation>
    <subcellularLocation>
        <location evidence="1">Nucleus</location>
        <location evidence="1">Nuclear pore complex</location>
    </subcellularLocation>
    <subcellularLocation>
        <location evidence="1">Nucleus envelope</location>
    </subcellularLocation>
    <text evidence="1 4">In interphase cells mainly localizes to the Golgi complex and colocalizes with dynactin at microtubule plus ends (PubMed:11483508). Localizes to the nuclear envelope and cytoplasmic stacks of nuclear pore complex known as annulate lamellae in a RANBP2-dependent manner during G2 phase of the cell cycle (By similarity).</text>
</comment>
<comment type="alternative products">
    <event type="alternative splicing"/>
    <isoform>
        <id>Q921C5-1</id>
        <name>1</name>
        <sequence type="displayed"/>
    </isoform>
    <isoform>
        <id>Q921C5-2</id>
        <name>2</name>
        <sequence type="described" ref="VSP_007970"/>
    </isoform>
    <isoform>
        <id>Q921C5-3</id>
        <name>3</name>
        <sequence type="described" ref="VSP_007971 VSP_007972"/>
    </isoform>
</comment>
<comment type="tissue specificity">
    <text evidence="9">Ubiquitously expressed with high expression in the spinal cord.</text>
</comment>
<comment type="domain">
    <text evidence="4">The fourth coiled coil region is involved in Golgi targeting and in the interaction with DCTN2.</text>
</comment>
<comment type="PTM">
    <text evidence="1">Phosphorylated by NEK9 in vitro.</text>
</comment>
<comment type="similarity">
    <text evidence="15">Belongs to the BicD family.</text>
</comment>
<comment type="sequence caution" evidence="15">
    <conflict type="erroneous initiation">
        <sequence resource="EMBL-CDS" id="BAC65630"/>
    </conflict>
    <text>Extended N-terminus.</text>
</comment>
<comment type="sequence caution" evidence="15">
    <molecule>Isoform 3</molecule>
    <conflict type="frameshift">
        <sequence resource="EMBL-CDS" id="BAB22282"/>
    </conflict>
</comment>
<proteinExistence type="evidence at protein level"/>
<keyword id="KW-0007">Acetylation</keyword>
<keyword id="KW-0025">Alternative splicing</keyword>
<keyword id="KW-0175">Coiled coil</keyword>
<keyword id="KW-0963">Cytoplasm</keyword>
<keyword id="KW-0206">Cytoskeleton</keyword>
<keyword id="KW-0333">Golgi apparatus</keyword>
<keyword id="KW-0509">mRNA transport</keyword>
<keyword id="KW-0906">Nuclear pore complex</keyword>
<keyword id="KW-0539">Nucleus</keyword>
<keyword id="KW-0597">Phosphoprotein</keyword>
<keyword id="KW-0653">Protein transport</keyword>
<keyword id="KW-1185">Reference proteome</keyword>
<keyword id="KW-0811">Translocation</keyword>
<keyword id="KW-0813">Transport</keyword>
<sequence>MSAPSEEEEYARLVMEAQPEWLRAEVKRLSHELAETTREKIQAAEYGLAVLEEKHQLKLQFEELEVDYEAIRSEMEQLKEAFGQAHTNHKKVAADGESREESLIQESASKEQYYVRKVLELQTELKQLRNVLTNTQSENERLTSVAQELKEINQNVEIQRGRLRDDIKEYKFREARLLQDYSELEEENISLQKQVSVLRQNQVEFEGLKHEIKRLEEETEYLNSQLEDAIRLKEISERQLEEALETLKTEREQKNNLRKELSHYMSINDSFYTSHLQVSLDGLKFSDDTVTAEPNNDAEALVNGFEHSGLVKSSLDNKTSTPRKDGLAPPSPSLVSDLLSELHISEIQKLKQQLVQMEREKVGLLATLQDTQKQLEQARGTLSEQHEKVNRLTENLSALRRLQAGKERQTSLDNEKDRDSHEDGDYYEVDINGPEILACKYHVAVAEAGELREQLKALRSTHEAREAQHAEEKGRYEAEGQALTEKISLLEKASHQDRELLAHLEKELKKVSDVAGETQGSLNVAQDELVTFSEELANLYHHVCMCNNETPNRVMLDYYREGQGKAGRTSPEGRGRRSPVLLPKGLLATEVGRADGGTGDNSPSPSSSLPSPLSDPRREPMNIYNLIAIIRDQIKHLQAAVDRTTELSRQRIASQELGPAVDKDKEALMEEILKLKSLLSTKREQITTLRTVLKANKQTAEVALANLKSKYENEKAMVTETMMKLRNELKALKEDAATFSSLRAMFATRCDEYITQLDEMQRQLAAAEDEKKTLNSLLRMAIQQKLALTQRLELLELDHEQTRRGRSKAASKAKPASPSL</sequence>
<feature type="initiator methionine" description="Removed" evidence="1">
    <location>
        <position position="1"/>
    </location>
</feature>
<feature type="chain" id="PRO_0000205360" description="Protein bicaudal D homolog 2">
    <location>
        <begin position="2"/>
        <end position="820"/>
    </location>
</feature>
<feature type="region of interest" description="Interaction with DYNLL1, DYNC1H1, DYNC1I2, DCTN1 and DCTN2" evidence="8">
    <location>
        <begin position="25"/>
        <end position="400"/>
    </location>
</feature>
<feature type="region of interest" description="Disordered" evidence="3">
    <location>
        <begin position="313"/>
        <end position="332"/>
    </location>
</feature>
<feature type="region of interest" description="Interaction with KIF5A" evidence="7">
    <location>
        <begin position="336"/>
        <end position="595"/>
    </location>
</feature>
<feature type="region of interest" description="Disordered" evidence="3">
    <location>
        <begin position="400"/>
        <end position="427"/>
    </location>
</feature>
<feature type="region of interest" description="Disordered" evidence="3">
    <location>
        <begin position="563"/>
        <end position="582"/>
    </location>
</feature>
<feature type="region of interest" description="Interaction with RANBP2" evidence="7">
    <location>
        <begin position="586"/>
        <end position="820"/>
    </location>
</feature>
<feature type="region of interest" description="Disordered" evidence="3">
    <location>
        <begin position="591"/>
        <end position="618"/>
    </location>
</feature>
<feature type="region of interest" description="Interaction with RAB6A" evidence="5 7 12">
    <location>
        <begin position="662"/>
        <end position="810"/>
    </location>
</feature>
<feature type="region of interest" description="Disordered" evidence="3">
    <location>
        <begin position="799"/>
        <end position="820"/>
    </location>
</feature>
<feature type="coiled-coil region" evidence="2">
    <location>
        <begin position="20"/>
        <end position="270"/>
    </location>
</feature>
<feature type="coiled-coil region" evidence="2">
    <location>
        <begin position="340"/>
        <end position="539"/>
    </location>
</feature>
<feature type="coiled-coil region" evidence="2">
    <location>
        <begin position="662"/>
        <end position="804"/>
    </location>
</feature>
<feature type="compositionally biased region" description="Basic and acidic residues" evidence="3">
    <location>
        <begin position="404"/>
        <end position="424"/>
    </location>
</feature>
<feature type="compositionally biased region" description="Low complexity" evidence="3">
    <location>
        <begin position="602"/>
        <end position="614"/>
    </location>
</feature>
<feature type="modified residue" description="N-acetylserine" evidence="1">
    <location>
        <position position="2"/>
    </location>
</feature>
<feature type="modified residue" description="Phosphoserine" evidence="1">
    <location>
        <position position="190"/>
    </location>
</feature>
<feature type="modified residue" description="Phosphoserine" evidence="1">
    <location>
        <position position="224"/>
    </location>
</feature>
<feature type="modified residue" description="Phosphoserine" evidence="1">
    <location>
        <position position="320"/>
    </location>
</feature>
<feature type="modified residue" description="Phosphothreonine" evidence="1">
    <location>
        <position position="321"/>
    </location>
</feature>
<feature type="modified residue" description="Phosphoserine" evidence="1">
    <location>
        <position position="345"/>
    </location>
</feature>
<feature type="modified residue" description="Phosphoserine" evidence="1">
    <location>
        <position position="397"/>
    </location>
</feature>
<feature type="modified residue" description="Phosphoserine" evidence="1">
    <location>
        <position position="570"/>
    </location>
</feature>
<feature type="modified residue" description="Phosphoserine" evidence="16">
    <location>
        <position position="578"/>
    </location>
</feature>
<feature type="modified residue" description="Phosphothreonine" evidence="1">
    <location>
        <position position="598"/>
    </location>
</feature>
<feature type="modified residue" description="Phosphoserine" evidence="1">
    <location>
        <position position="819"/>
    </location>
</feature>
<feature type="splice variant" id="VSP_007971" description="In isoform 3." evidence="15">
    <original>APPSPSLVSDL</original>
    <variation>VHPLHALCLTV</variation>
    <location>
        <begin position="328"/>
        <end position="338"/>
    </location>
</feature>
<feature type="splice variant" id="VSP_007972" description="In isoform 3." evidence="15">
    <location>
        <begin position="339"/>
        <end position="820"/>
    </location>
</feature>
<feature type="splice variant" id="VSP_007970" description="In isoform 2." evidence="14">
    <original>L</original>
    <variation>VSHTCACASERAEGAGLANQVFCSEKHSIYCD</variation>
    <location>
        <position position="820"/>
    </location>
</feature>
<protein>
    <recommendedName>
        <fullName>Protein bicaudal D homolog 2</fullName>
        <shortName>Bic-D 2</shortName>
    </recommendedName>
</protein>
<name>BICD2_MOUSE</name>
<dbReference type="EMBL" id="AJ250106">
    <property type="protein sequence ID" value="CAC51393.1"/>
    <property type="molecule type" value="mRNA"/>
</dbReference>
<dbReference type="EMBL" id="AK122348">
    <property type="protein sequence ID" value="BAC65630.1"/>
    <property type="status" value="ALT_INIT"/>
    <property type="molecule type" value="mRNA"/>
</dbReference>
<dbReference type="EMBL" id="BC032198">
    <property type="protein sequence ID" value="AAH32198.1"/>
    <property type="molecule type" value="mRNA"/>
</dbReference>
<dbReference type="EMBL" id="AK002683">
    <property type="protein sequence ID" value="BAB22282.1"/>
    <property type="status" value="ALT_FRAME"/>
    <property type="molecule type" value="mRNA"/>
</dbReference>
<dbReference type="EMBL" id="AK003456">
    <property type="protein sequence ID" value="BAC25035.1"/>
    <property type="molecule type" value="mRNA"/>
</dbReference>
<dbReference type="CCDS" id="CCDS36656.1">
    <molecule id="Q921C5-1"/>
</dbReference>
<dbReference type="CCDS" id="CCDS36657.1">
    <molecule id="Q921C5-2"/>
</dbReference>
<dbReference type="RefSeq" id="NP_001034268.1">
    <molecule id="Q921C5-2"/>
    <property type="nucleotide sequence ID" value="NM_001039179.2"/>
</dbReference>
<dbReference type="RefSeq" id="NP_001034269.1">
    <property type="nucleotide sequence ID" value="NM_001039180.2"/>
</dbReference>
<dbReference type="RefSeq" id="NP_084067.1">
    <molecule id="Q921C5-1"/>
    <property type="nucleotide sequence ID" value="NM_029791.4"/>
</dbReference>
<dbReference type="SMR" id="Q921C5"/>
<dbReference type="BioGRID" id="218383">
    <property type="interactions" value="22"/>
</dbReference>
<dbReference type="DIP" id="DIP-49453N"/>
<dbReference type="FunCoup" id="Q921C5">
    <property type="interactions" value="4538"/>
</dbReference>
<dbReference type="IntAct" id="Q921C5">
    <property type="interactions" value="20"/>
</dbReference>
<dbReference type="MINT" id="Q921C5"/>
<dbReference type="STRING" id="10090.ENSMUSP00000039394"/>
<dbReference type="iPTMnet" id="Q921C5"/>
<dbReference type="PhosphoSitePlus" id="Q921C5"/>
<dbReference type="SwissPalm" id="Q921C5"/>
<dbReference type="jPOST" id="Q921C5"/>
<dbReference type="PaxDb" id="10090-ENSMUSP00000039394"/>
<dbReference type="PeptideAtlas" id="Q921C5"/>
<dbReference type="ProteomicsDB" id="273741">
    <molecule id="Q921C5-1"/>
</dbReference>
<dbReference type="ProteomicsDB" id="273742">
    <molecule id="Q921C5-2"/>
</dbReference>
<dbReference type="ProteomicsDB" id="273743">
    <molecule id="Q921C5-3"/>
</dbReference>
<dbReference type="Pumba" id="Q921C5"/>
<dbReference type="Antibodypedia" id="13783">
    <property type="antibodies" value="205 antibodies from 27 providers"/>
</dbReference>
<dbReference type="Ensembl" id="ENSMUST00000048544.14">
    <molecule id="Q921C5-2"/>
    <property type="protein sequence ID" value="ENSMUSP00000039394.7"/>
    <property type="gene ID" value="ENSMUSG00000037933.17"/>
</dbReference>
<dbReference type="Ensembl" id="ENSMUST00000110085.11">
    <molecule id="Q921C5-1"/>
    <property type="protein sequence ID" value="ENSMUSP00000105712.4"/>
    <property type="gene ID" value="ENSMUSG00000037933.17"/>
</dbReference>
<dbReference type="GeneID" id="76895"/>
<dbReference type="KEGG" id="mmu:76895"/>
<dbReference type="UCSC" id="uc007qjg.2">
    <molecule id="Q921C5-1"/>
    <property type="organism name" value="mouse"/>
</dbReference>
<dbReference type="UCSC" id="uc007qji.2">
    <molecule id="Q921C5-2"/>
    <property type="organism name" value="mouse"/>
</dbReference>
<dbReference type="AGR" id="MGI:1924145"/>
<dbReference type="CTD" id="23299"/>
<dbReference type="MGI" id="MGI:1924145">
    <property type="gene designation" value="Bicd2"/>
</dbReference>
<dbReference type="VEuPathDB" id="HostDB:ENSMUSG00000037933"/>
<dbReference type="eggNOG" id="KOG0999">
    <property type="taxonomic scope" value="Eukaryota"/>
</dbReference>
<dbReference type="GeneTree" id="ENSGT00940000154471"/>
<dbReference type="InParanoid" id="Q921C5"/>
<dbReference type="OMA" id="CACASER"/>
<dbReference type="OrthoDB" id="54177at9989"/>
<dbReference type="PhylomeDB" id="Q921C5"/>
<dbReference type="TreeFam" id="TF323833"/>
<dbReference type="Reactome" id="R-MMU-6811436">
    <property type="pathway name" value="COPI-independent Golgi-to-ER retrograde traffic"/>
</dbReference>
<dbReference type="BioGRID-ORCS" id="76895">
    <property type="hits" value="5 hits in 77 CRISPR screens"/>
</dbReference>
<dbReference type="ChiTaRS" id="Bicd2">
    <property type="organism name" value="mouse"/>
</dbReference>
<dbReference type="PRO" id="PR:Q921C5"/>
<dbReference type="Proteomes" id="UP000000589">
    <property type="component" value="Chromosome 13"/>
</dbReference>
<dbReference type="RNAct" id="Q921C5">
    <property type="molecule type" value="protein"/>
</dbReference>
<dbReference type="Bgee" id="ENSMUSG00000037933">
    <property type="expression patterns" value="Expressed in rostral migratory stream and 266 other cell types or tissues"/>
</dbReference>
<dbReference type="ExpressionAtlas" id="Q921C5">
    <property type="expression patterns" value="baseline and differential"/>
</dbReference>
<dbReference type="GO" id="GO:0005642">
    <property type="term" value="C:annulate lamellae"/>
    <property type="evidence" value="ECO:0000250"/>
    <property type="project" value="UniProtKB"/>
</dbReference>
<dbReference type="GO" id="GO:0005813">
    <property type="term" value="C:centrosome"/>
    <property type="evidence" value="ECO:0007669"/>
    <property type="project" value="Ensembl"/>
</dbReference>
<dbReference type="GO" id="GO:0031410">
    <property type="term" value="C:cytoplasmic vesicle"/>
    <property type="evidence" value="ECO:0000314"/>
    <property type="project" value="BHF-UCL"/>
</dbReference>
<dbReference type="GO" id="GO:0005829">
    <property type="term" value="C:cytosol"/>
    <property type="evidence" value="ECO:0007669"/>
    <property type="project" value="Ensembl"/>
</dbReference>
<dbReference type="GO" id="GO:0005794">
    <property type="term" value="C:Golgi apparatus"/>
    <property type="evidence" value="ECO:0000314"/>
    <property type="project" value="UniProtKB"/>
</dbReference>
<dbReference type="GO" id="GO:0005635">
    <property type="term" value="C:nuclear envelope"/>
    <property type="evidence" value="ECO:0000250"/>
    <property type="project" value="UniProtKB"/>
</dbReference>
<dbReference type="GO" id="GO:0005643">
    <property type="term" value="C:nuclear pore"/>
    <property type="evidence" value="ECO:0000250"/>
    <property type="project" value="UniProtKB"/>
</dbReference>
<dbReference type="GO" id="GO:0005886">
    <property type="term" value="C:plasma membrane"/>
    <property type="evidence" value="ECO:0007669"/>
    <property type="project" value="Ensembl"/>
</dbReference>
<dbReference type="GO" id="GO:0008093">
    <property type="term" value="F:cytoskeletal anchor activity"/>
    <property type="evidence" value="ECO:0007669"/>
    <property type="project" value="InterPro"/>
</dbReference>
<dbReference type="GO" id="GO:0034452">
    <property type="term" value="F:dynactin binding"/>
    <property type="evidence" value="ECO:0000314"/>
    <property type="project" value="UniProtKB"/>
</dbReference>
<dbReference type="GO" id="GO:0070840">
    <property type="term" value="F:dynein complex binding"/>
    <property type="evidence" value="ECO:0000314"/>
    <property type="project" value="UniProtKB"/>
</dbReference>
<dbReference type="GO" id="GO:0051959">
    <property type="term" value="F:dynein light intermediate chain binding"/>
    <property type="evidence" value="ECO:0000353"/>
    <property type="project" value="FlyBase"/>
</dbReference>
<dbReference type="GO" id="GO:0031267">
    <property type="term" value="F:small GTPase binding"/>
    <property type="evidence" value="ECO:0000353"/>
    <property type="project" value="BHF-UCL"/>
</dbReference>
<dbReference type="GO" id="GO:0051642">
    <property type="term" value="P:centrosome localization"/>
    <property type="evidence" value="ECO:0000250"/>
    <property type="project" value="UniProtKB"/>
</dbReference>
<dbReference type="GO" id="GO:0072393">
    <property type="term" value="P:microtubule anchoring at microtubule organizing center"/>
    <property type="evidence" value="ECO:0000315"/>
    <property type="project" value="BHF-UCL"/>
</dbReference>
<dbReference type="GO" id="GO:0007018">
    <property type="term" value="P:microtubule-based movement"/>
    <property type="evidence" value="ECO:0000314"/>
    <property type="project" value="MGI"/>
</dbReference>
<dbReference type="GO" id="GO:0072385">
    <property type="term" value="P:minus-end-directed organelle transport along microtubule"/>
    <property type="evidence" value="ECO:0000315"/>
    <property type="project" value="BHF-UCL"/>
</dbReference>
<dbReference type="GO" id="GO:0051028">
    <property type="term" value="P:mRNA transport"/>
    <property type="evidence" value="ECO:0007669"/>
    <property type="project" value="UniProtKB-KW"/>
</dbReference>
<dbReference type="GO" id="GO:0034067">
    <property type="term" value="P:protein localization to Golgi apparatus"/>
    <property type="evidence" value="ECO:0000315"/>
    <property type="project" value="UniProtKB"/>
</dbReference>
<dbReference type="GO" id="GO:0015031">
    <property type="term" value="P:protein transport"/>
    <property type="evidence" value="ECO:0007669"/>
    <property type="project" value="UniProtKB-KW"/>
</dbReference>
<dbReference type="GO" id="GO:0070507">
    <property type="term" value="P:regulation of microtubule cytoskeleton organization"/>
    <property type="evidence" value="ECO:0007669"/>
    <property type="project" value="Ensembl"/>
</dbReference>
<dbReference type="GO" id="GO:0006890">
    <property type="term" value="P:retrograde vesicle-mediated transport, Golgi to endoplasmic reticulum"/>
    <property type="evidence" value="ECO:0000315"/>
    <property type="project" value="UniProtKB"/>
</dbReference>
<dbReference type="Gene3D" id="6.10.250.2470">
    <property type="match status" value="1"/>
</dbReference>
<dbReference type="InterPro" id="IPR018477">
    <property type="entry name" value="BICD"/>
</dbReference>
<dbReference type="PANTHER" id="PTHR31233">
    <property type="entry name" value="BICAUDAL D FAMILY MEMBER"/>
    <property type="match status" value="1"/>
</dbReference>
<dbReference type="PANTHER" id="PTHR31233:SF7">
    <property type="entry name" value="PROTEIN BICAUDAL D HOMOLOG 2"/>
    <property type="match status" value="1"/>
</dbReference>
<dbReference type="Pfam" id="PF09730">
    <property type="entry name" value="BicD"/>
    <property type="match status" value="1"/>
</dbReference>
<reference key="1">
    <citation type="journal article" date="2001" name="EMBO J.">
        <title>Mammalian Golgi-associated Bicaudal-D2 functions in the dynein-dynactin pathway by interacting with these complexes.</title>
        <authorList>
            <person name="Hoogenraad C.C."/>
            <person name="Akhmanova A."/>
            <person name="Howell S.A."/>
            <person name="Dortland B.R."/>
            <person name="de Zeeuw C.I."/>
            <person name="Willemsen R."/>
            <person name="Visser P."/>
            <person name="Grosveld F."/>
            <person name="Galjart N."/>
        </authorList>
    </citation>
    <scope>NUCLEOTIDE SEQUENCE [MRNA] (ISOFORM 1)</scope>
    <scope>FUNCTION</scope>
    <scope>INTERACTION WITH DCTN2</scope>
    <scope>SUBCELLULAR LOCATION</scope>
    <scope>DOMAIN</scope>
</reference>
<reference key="2">
    <citation type="journal article" date="2003" name="DNA Res.">
        <title>Prediction of the coding sequences of mouse homologues of KIAA gene: II. The complete nucleotide sequences of 400 mouse KIAA-homologous cDNAs identified by screening of terminal sequences of cDNA clones randomly sampled from size-fractionated libraries.</title>
        <authorList>
            <person name="Okazaki N."/>
            <person name="Kikuno R."/>
            <person name="Ohara R."/>
            <person name="Inamoto S."/>
            <person name="Aizawa H."/>
            <person name="Yuasa S."/>
            <person name="Nakajima D."/>
            <person name="Nagase T."/>
            <person name="Ohara O."/>
            <person name="Koga H."/>
        </authorList>
    </citation>
    <scope>NUCLEOTIDE SEQUENCE [LARGE SCALE MRNA] (ISOFORM 2)</scope>
    <source>
        <tissue>Brain</tissue>
    </source>
</reference>
<reference key="3">
    <citation type="journal article" date="2004" name="Genome Res.">
        <title>The status, quality, and expansion of the NIH full-length cDNA project: the Mammalian Gene Collection (MGC).</title>
        <authorList>
            <consortium name="The MGC Project Team"/>
        </authorList>
    </citation>
    <scope>NUCLEOTIDE SEQUENCE [LARGE SCALE MRNA] (ISOFORM 1)</scope>
    <source>
        <tissue>Mammary tumor</tissue>
    </source>
</reference>
<reference key="4">
    <citation type="journal article" date="2005" name="Science">
        <title>The transcriptional landscape of the mammalian genome.</title>
        <authorList>
            <person name="Carninci P."/>
            <person name="Kasukawa T."/>
            <person name="Katayama S."/>
            <person name="Gough J."/>
            <person name="Frith M.C."/>
            <person name="Maeda N."/>
            <person name="Oyama R."/>
            <person name="Ravasi T."/>
            <person name="Lenhard B."/>
            <person name="Wells C."/>
            <person name="Kodzius R."/>
            <person name="Shimokawa K."/>
            <person name="Bajic V.B."/>
            <person name="Brenner S.E."/>
            <person name="Batalov S."/>
            <person name="Forrest A.R."/>
            <person name="Zavolan M."/>
            <person name="Davis M.J."/>
            <person name="Wilming L.G."/>
            <person name="Aidinis V."/>
            <person name="Allen J.E."/>
            <person name="Ambesi-Impiombato A."/>
            <person name="Apweiler R."/>
            <person name="Aturaliya R.N."/>
            <person name="Bailey T.L."/>
            <person name="Bansal M."/>
            <person name="Baxter L."/>
            <person name="Beisel K.W."/>
            <person name="Bersano T."/>
            <person name="Bono H."/>
            <person name="Chalk A.M."/>
            <person name="Chiu K.P."/>
            <person name="Choudhary V."/>
            <person name="Christoffels A."/>
            <person name="Clutterbuck D.R."/>
            <person name="Crowe M.L."/>
            <person name="Dalla E."/>
            <person name="Dalrymple B.P."/>
            <person name="de Bono B."/>
            <person name="Della Gatta G."/>
            <person name="di Bernardo D."/>
            <person name="Down T."/>
            <person name="Engstrom P."/>
            <person name="Fagiolini M."/>
            <person name="Faulkner G."/>
            <person name="Fletcher C.F."/>
            <person name="Fukushima T."/>
            <person name="Furuno M."/>
            <person name="Futaki S."/>
            <person name="Gariboldi M."/>
            <person name="Georgii-Hemming P."/>
            <person name="Gingeras T.R."/>
            <person name="Gojobori T."/>
            <person name="Green R.E."/>
            <person name="Gustincich S."/>
            <person name="Harbers M."/>
            <person name="Hayashi Y."/>
            <person name="Hensch T.K."/>
            <person name="Hirokawa N."/>
            <person name="Hill D."/>
            <person name="Huminiecki L."/>
            <person name="Iacono M."/>
            <person name="Ikeo K."/>
            <person name="Iwama A."/>
            <person name="Ishikawa T."/>
            <person name="Jakt M."/>
            <person name="Kanapin A."/>
            <person name="Katoh M."/>
            <person name="Kawasawa Y."/>
            <person name="Kelso J."/>
            <person name="Kitamura H."/>
            <person name="Kitano H."/>
            <person name="Kollias G."/>
            <person name="Krishnan S.P."/>
            <person name="Kruger A."/>
            <person name="Kummerfeld S.K."/>
            <person name="Kurochkin I.V."/>
            <person name="Lareau L.F."/>
            <person name="Lazarevic D."/>
            <person name="Lipovich L."/>
            <person name="Liu J."/>
            <person name="Liuni S."/>
            <person name="McWilliam S."/>
            <person name="Madan Babu M."/>
            <person name="Madera M."/>
            <person name="Marchionni L."/>
            <person name="Matsuda H."/>
            <person name="Matsuzawa S."/>
            <person name="Miki H."/>
            <person name="Mignone F."/>
            <person name="Miyake S."/>
            <person name="Morris K."/>
            <person name="Mottagui-Tabar S."/>
            <person name="Mulder N."/>
            <person name="Nakano N."/>
            <person name="Nakauchi H."/>
            <person name="Ng P."/>
            <person name="Nilsson R."/>
            <person name="Nishiguchi S."/>
            <person name="Nishikawa S."/>
            <person name="Nori F."/>
            <person name="Ohara O."/>
            <person name="Okazaki Y."/>
            <person name="Orlando V."/>
            <person name="Pang K.C."/>
            <person name="Pavan W.J."/>
            <person name="Pavesi G."/>
            <person name="Pesole G."/>
            <person name="Petrovsky N."/>
            <person name="Piazza S."/>
            <person name="Reed J."/>
            <person name="Reid J.F."/>
            <person name="Ring B.Z."/>
            <person name="Ringwald M."/>
            <person name="Rost B."/>
            <person name="Ruan Y."/>
            <person name="Salzberg S.L."/>
            <person name="Sandelin A."/>
            <person name="Schneider C."/>
            <person name="Schoenbach C."/>
            <person name="Sekiguchi K."/>
            <person name="Semple C.A."/>
            <person name="Seno S."/>
            <person name="Sessa L."/>
            <person name="Sheng Y."/>
            <person name="Shibata Y."/>
            <person name="Shimada H."/>
            <person name="Shimada K."/>
            <person name="Silva D."/>
            <person name="Sinclair B."/>
            <person name="Sperling S."/>
            <person name="Stupka E."/>
            <person name="Sugiura K."/>
            <person name="Sultana R."/>
            <person name="Takenaka Y."/>
            <person name="Taki K."/>
            <person name="Tammoja K."/>
            <person name="Tan S.L."/>
            <person name="Tang S."/>
            <person name="Taylor M.S."/>
            <person name="Tegner J."/>
            <person name="Teichmann S.A."/>
            <person name="Ueda H.R."/>
            <person name="van Nimwegen E."/>
            <person name="Verardo R."/>
            <person name="Wei C.L."/>
            <person name="Yagi K."/>
            <person name="Yamanishi H."/>
            <person name="Zabarovsky E."/>
            <person name="Zhu S."/>
            <person name="Zimmer A."/>
            <person name="Hide W."/>
            <person name="Bult C."/>
            <person name="Grimmond S.M."/>
            <person name="Teasdale R.D."/>
            <person name="Liu E.T."/>
            <person name="Brusic V."/>
            <person name="Quackenbush J."/>
            <person name="Wahlestedt C."/>
            <person name="Mattick J.S."/>
            <person name="Hume D.A."/>
            <person name="Kai C."/>
            <person name="Sasaki D."/>
            <person name="Tomaru Y."/>
            <person name="Fukuda S."/>
            <person name="Kanamori-Katayama M."/>
            <person name="Suzuki M."/>
            <person name="Aoki J."/>
            <person name="Arakawa T."/>
            <person name="Iida J."/>
            <person name="Imamura K."/>
            <person name="Itoh M."/>
            <person name="Kato T."/>
            <person name="Kawaji H."/>
            <person name="Kawagashira N."/>
            <person name="Kawashima T."/>
            <person name="Kojima M."/>
            <person name="Kondo S."/>
            <person name="Konno H."/>
            <person name="Nakano K."/>
            <person name="Ninomiya N."/>
            <person name="Nishio T."/>
            <person name="Okada M."/>
            <person name="Plessy C."/>
            <person name="Shibata K."/>
            <person name="Shiraki T."/>
            <person name="Suzuki S."/>
            <person name="Tagami M."/>
            <person name="Waki K."/>
            <person name="Watahiki A."/>
            <person name="Okamura-Oho Y."/>
            <person name="Suzuki H."/>
            <person name="Kawai J."/>
            <person name="Hayashizaki Y."/>
        </authorList>
    </citation>
    <scope>PARTIAL NUCLEOTIDE SEQUENCE [LARGE SCALE MRNA] (ISOFORMS 1 AND 3)</scope>
    <source>
        <strain>C57BL/6J</strain>
        <tissue>Embryo</tissue>
        <tissue>Kidney</tissue>
    </source>
</reference>
<reference key="5">
    <citation type="journal article" date="2002" name="Nat. Cell Biol.">
        <title>Bicaudal-D regulates COPI-independent Golgi-ER transport by recruiting the dynein-dynactin motor complex.</title>
        <authorList>
            <person name="Matanis T."/>
            <person name="Akhmanova A."/>
            <person name="Wulf P."/>
            <person name="Del Nery E."/>
            <person name="Weide T."/>
            <person name="Stepanova T."/>
            <person name="Galjart N."/>
            <person name="Grosveld F."/>
            <person name="Goud B."/>
            <person name="De Zeeuw C.I."/>
            <person name="Barnekow A."/>
            <person name="Hoogenraad C.C."/>
        </authorList>
    </citation>
    <scope>FUNCTION</scope>
    <scope>INTERACTION WITH RAB6A</scope>
    <scope>SUBCELLULAR LOCATION</scope>
</reference>
<reference key="6">
    <citation type="journal article" date="2003" name="J. Biol. Chem.">
        <title>Identification of targets for calcium signaling through the copine family of proteins. Characterization of a coiled-coil copine-binding motif.</title>
        <authorList>
            <person name="Tomsig J.L."/>
            <person name="Snyder S.L."/>
            <person name="Creutz C.E."/>
        </authorList>
    </citation>
    <scope>INTERACTION WITH CPNE4</scope>
</reference>
<reference key="7">
    <citation type="journal article" date="2009" name="Mol. Cell. Proteomics">
        <title>Large scale localization of protein phosphorylation by use of electron capture dissociation mass spectrometry.</title>
        <authorList>
            <person name="Sweet S.M."/>
            <person name="Bailey C.M."/>
            <person name="Cunningham D.L."/>
            <person name="Heath J.K."/>
            <person name="Cooper H.J."/>
        </authorList>
    </citation>
    <scope>IDENTIFICATION BY MASS SPECTROMETRY [LARGE SCALE ANALYSIS]</scope>
    <source>
        <tissue>Embryonic fibroblast</tissue>
    </source>
</reference>
<reference key="8">
    <citation type="journal article" date="2010" name="Cell">
        <title>A tissue-specific atlas of mouse protein phosphorylation and expression.</title>
        <authorList>
            <person name="Huttlin E.L."/>
            <person name="Jedrychowski M.P."/>
            <person name="Elias J.E."/>
            <person name="Goswami T."/>
            <person name="Rad R."/>
            <person name="Beausoleil S.A."/>
            <person name="Villen J."/>
            <person name="Haas W."/>
            <person name="Sowa M.E."/>
            <person name="Gygi S.P."/>
        </authorList>
    </citation>
    <scope>PHOSPHORYLATION [LARGE SCALE ANALYSIS] AT SER-578</scope>
    <scope>IDENTIFICATION BY MASS SPECTROMETRY [LARGE SCALE ANALYSIS]</scope>
    <source>
        <tissue>Brown adipose tissue</tissue>
        <tissue>Heart</tissue>
        <tissue>Kidney</tissue>
        <tissue>Lung</tissue>
        <tissue>Spleen</tissue>
        <tissue>Testis</tissue>
    </source>
</reference>
<reference key="9">
    <citation type="journal article" date="2010" name="PLoS Biol.">
        <title>Bicaudal D2, dynein, and kinesin-1 associate with nuclear pore complexes and regulate centrosome and nuclear positioning during mitotic entry.</title>
        <authorList>
            <person name="Splinter D."/>
            <person name="Tanenbaum M.E."/>
            <person name="Lindqvist A."/>
            <person name="Jaarsma D."/>
            <person name="Flotho A."/>
            <person name="Yu K.L."/>
            <person name="Grigoriev I."/>
            <person name="Engelsma D."/>
            <person name="Haasdijk E.D."/>
            <person name="Keijzer N."/>
            <person name="Demmers J."/>
            <person name="Fornerod M."/>
            <person name="Melchior F."/>
            <person name="Hoogenraad C.C."/>
            <person name="Medema R.H."/>
            <person name="Akhmanova A."/>
        </authorList>
    </citation>
    <scope>FUNCTION</scope>
    <scope>INTERACTION WITH RANBP2; RAB6A AND KIF5A</scope>
</reference>
<reference key="10">
    <citation type="journal article" date="2012" name="Mol. Biol. Cell">
        <title>BICD2, dynactin, and LIS1 cooperate in regulating dynein recruitment to cellular structures.</title>
        <authorList>
            <person name="Splinter D."/>
            <person name="Razafsky D.S."/>
            <person name="Schlager M.A."/>
            <person name="Serra-Marques A."/>
            <person name="Grigoriev I."/>
            <person name="Demmers J."/>
            <person name="Keijzer N."/>
            <person name="Jiang K."/>
            <person name="Poser I."/>
            <person name="Hyman A.A."/>
            <person name="Hoogenraad C.C."/>
            <person name="King S.J."/>
            <person name="Akhmanova A."/>
        </authorList>
    </citation>
    <scope>FUNCTION</scope>
    <scope>INTERACTION WITH DYNLL1; DYNC1H1; DYNC1I2; DCTN1 AND DCTN2</scope>
</reference>
<reference key="11">
    <citation type="journal article" date="2013" name="Am. J. Hum. Genet.">
        <title>Molecular defects in the motor adaptor BICD2 cause proximal spinal muscular atrophy with autosomal-dominant inheritance.</title>
        <authorList>
            <person name="Peeters K."/>
            <person name="Litvinenko I."/>
            <person name="Asselbergh B."/>
            <person name="Almeida-Souza L."/>
            <person name="Chamova T."/>
            <person name="Geuens T."/>
            <person name="Ydens E."/>
            <person name="Zimon M."/>
            <person name="Irobi J."/>
            <person name="De Vriendt E."/>
            <person name="De Winter V."/>
            <person name="Ooms T."/>
            <person name="Timmerman V."/>
            <person name="Tournev I."/>
            <person name="Jordanova A."/>
        </authorList>
    </citation>
    <scope>TISSUE SPECIFICITY</scope>
</reference>
<reference key="12">
    <citation type="journal article" date="2014" name="EMBO J.">
        <title>In vitro reconstitution of a highly processive recombinant human dynein complex.</title>
        <authorList>
            <person name="Schlager M.A."/>
            <person name="Hoang H.T."/>
            <person name="Urnavicius L."/>
            <person name="Bullock S.L."/>
            <person name="Carter A.P."/>
        </authorList>
    </citation>
    <scope>FUNCTION</scope>
    <scope>COMPLEX FORMATION WITH DYNEIN AND DYNACTIN</scope>
</reference>
<reference key="13">
    <citation type="journal article" date="2014" name="Science">
        <title>Activation of cytoplasmic dynein motility by dynactin-cargo adapter complexes.</title>
        <authorList>
            <person name="McKenney R.J."/>
            <person name="Huynh W."/>
            <person name="Tanenbaum M.E."/>
            <person name="Bhabha G."/>
            <person name="Vale R.D."/>
        </authorList>
    </citation>
    <scope>FUNCTION</scope>
</reference>
<reference key="14">
    <citation type="journal article" date="2015" name="Biochim. Biophys. Acta">
        <title>Reconstitution of the targeting of Rab6A to the Golgi apparatus in semi-intact HeLa cells: A role of BICD2 in stabilizing Rab6A on Golgi membranes and a concerted role of Rab6A/BICD2 interactions in Golgi-to-ER retrograde transport.</title>
        <authorList>
            <person name="Matsuto M."/>
            <person name="Kano F."/>
            <person name="Murata M."/>
        </authorList>
    </citation>
    <scope>FUNCTION</scope>
    <scope>INTERACTION WITH RAB6A</scope>
    <scope>SUBCELLULAR LOCATION</scope>
</reference>
<reference key="15">
    <citation type="journal article" date="2016" name="EMBO J.">
        <title>Tyrosination of alpha-tubulin controls the initiation of processive dynein-dynactin motility.</title>
        <authorList>
            <person name="McKenney R.J."/>
            <person name="Huynh W."/>
            <person name="Vale R.D."/>
            <person name="Sirajuddin M."/>
        </authorList>
    </citation>
    <scope>ASSOCIATION WITH MICROTUBULES</scope>
</reference>
<gene>
    <name type="primary">Bicd2</name>
    <name type="synonym">Kiaa0699</name>
</gene>